<accession>B4STS0</accession>
<feature type="chain" id="PRO_1000146950" description="Probable alpha-L-glutamate ligase">
    <location>
        <begin position="1"/>
        <end position="292"/>
    </location>
</feature>
<feature type="domain" description="ATP-grasp" evidence="1">
    <location>
        <begin position="104"/>
        <end position="287"/>
    </location>
</feature>
<feature type="binding site" evidence="1">
    <location>
        <position position="141"/>
    </location>
    <ligand>
        <name>ATP</name>
        <dbReference type="ChEBI" id="CHEBI:30616"/>
    </ligand>
</feature>
<feature type="binding site" evidence="1">
    <location>
        <begin position="178"/>
        <end position="179"/>
    </location>
    <ligand>
        <name>ATP</name>
        <dbReference type="ChEBI" id="CHEBI:30616"/>
    </ligand>
</feature>
<feature type="binding site" evidence="1">
    <location>
        <position position="187"/>
    </location>
    <ligand>
        <name>ATP</name>
        <dbReference type="ChEBI" id="CHEBI:30616"/>
    </ligand>
</feature>
<feature type="binding site" evidence="1">
    <location>
        <begin position="211"/>
        <end position="213"/>
    </location>
    <ligand>
        <name>ATP</name>
        <dbReference type="ChEBI" id="CHEBI:30616"/>
    </ligand>
</feature>
<feature type="binding site" evidence="1">
    <location>
        <position position="248"/>
    </location>
    <ligand>
        <name>Mg(2+)</name>
        <dbReference type="ChEBI" id="CHEBI:18420"/>
        <label>1</label>
    </ligand>
</feature>
<feature type="binding site" evidence="1">
    <location>
        <position position="248"/>
    </location>
    <ligand>
        <name>Mn(2+)</name>
        <dbReference type="ChEBI" id="CHEBI:29035"/>
        <label>1</label>
    </ligand>
</feature>
<feature type="binding site" evidence="1">
    <location>
        <position position="260"/>
    </location>
    <ligand>
        <name>Mg(2+)</name>
        <dbReference type="ChEBI" id="CHEBI:18420"/>
        <label>1</label>
    </ligand>
</feature>
<feature type="binding site" evidence="1">
    <location>
        <position position="260"/>
    </location>
    <ligand>
        <name>Mg(2+)</name>
        <dbReference type="ChEBI" id="CHEBI:18420"/>
        <label>2</label>
    </ligand>
</feature>
<feature type="binding site" evidence="1">
    <location>
        <position position="260"/>
    </location>
    <ligand>
        <name>Mn(2+)</name>
        <dbReference type="ChEBI" id="CHEBI:29035"/>
        <label>1</label>
    </ligand>
</feature>
<feature type="binding site" evidence="1">
    <location>
        <position position="260"/>
    </location>
    <ligand>
        <name>Mn(2+)</name>
        <dbReference type="ChEBI" id="CHEBI:29035"/>
        <label>2</label>
    </ligand>
</feature>
<feature type="binding site" evidence="1">
    <location>
        <position position="262"/>
    </location>
    <ligand>
        <name>Mg(2+)</name>
        <dbReference type="ChEBI" id="CHEBI:18420"/>
        <label>2</label>
    </ligand>
</feature>
<feature type="binding site" evidence="1">
    <location>
        <position position="262"/>
    </location>
    <ligand>
        <name>Mn(2+)</name>
        <dbReference type="ChEBI" id="CHEBI:29035"/>
        <label>2</label>
    </ligand>
</feature>
<protein>
    <recommendedName>
        <fullName evidence="1">Probable alpha-L-glutamate ligase</fullName>
        <ecNumber evidence="1">6.3.2.-</ecNumber>
    </recommendedName>
</protein>
<name>RIMK_STRM5</name>
<comment type="cofactor">
    <cofactor evidence="1">
        <name>Mg(2+)</name>
        <dbReference type="ChEBI" id="CHEBI:18420"/>
    </cofactor>
    <cofactor evidence="1">
        <name>Mn(2+)</name>
        <dbReference type="ChEBI" id="CHEBI:29035"/>
    </cofactor>
    <text evidence="1">Binds 2 magnesium or manganese ions per subunit.</text>
</comment>
<comment type="similarity">
    <text evidence="1">Belongs to the RimK family.</text>
</comment>
<keyword id="KW-0067">ATP-binding</keyword>
<keyword id="KW-0436">Ligase</keyword>
<keyword id="KW-0460">Magnesium</keyword>
<keyword id="KW-0464">Manganese</keyword>
<keyword id="KW-0479">Metal-binding</keyword>
<keyword id="KW-0547">Nucleotide-binding</keyword>
<keyword id="KW-0648">Protein biosynthesis</keyword>
<reference key="1">
    <citation type="submission" date="2008-06" db="EMBL/GenBank/DDBJ databases">
        <title>Complete sequence of Stenotrophomonas maltophilia R551-3.</title>
        <authorList>
            <consortium name="US DOE Joint Genome Institute"/>
            <person name="Lucas S."/>
            <person name="Copeland A."/>
            <person name="Lapidus A."/>
            <person name="Glavina del Rio T."/>
            <person name="Dalin E."/>
            <person name="Tice H."/>
            <person name="Pitluck S."/>
            <person name="Chain P."/>
            <person name="Malfatti S."/>
            <person name="Shin M."/>
            <person name="Vergez L."/>
            <person name="Lang D."/>
            <person name="Schmutz J."/>
            <person name="Larimer F."/>
            <person name="Land M."/>
            <person name="Hauser L."/>
            <person name="Kyrpides N."/>
            <person name="Mikhailova N."/>
            <person name="Taghavi S."/>
            <person name="Monchy S."/>
            <person name="Newman L."/>
            <person name="Vangronsveld J."/>
            <person name="van der Lelie D."/>
            <person name="Richardson P."/>
        </authorList>
    </citation>
    <scope>NUCLEOTIDE SEQUENCE [LARGE SCALE GENOMIC DNA]</scope>
    <source>
        <strain>R551-3</strain>
    </source>
</reference>
<dbReference type="EC" id="6.3.2.-" evidence="1"/>
<dbReference type="EMBL" id="CP001111">
    <property type="protein sequence ID" value="ACF52883.1"/>
    <property type="molecule type" value="Genomic_DNA"/>
</dbReference>
<dbReference type="RefSeq" id="WP_012511943.1">
    <property type="nucleotide sequence ID" value="NC_011071.1"/>
</dbReference>
<dbReference type="SMR" id="B4STS0"/>
<dbReference type="STRING" id="391008.Smal_3184"/>
<dbReference type="KEGG" id="smt:Smal_3184"/>
<dbReference type="eggNOG" id="COG0189">
    <property type="taxonomic scope" value="Bacteria"/>
</dbReference>
<dbReference type="HOGENOM" id="CLU_054353_0_1_6"/>
<dbReference type="OrthoDB" id="3865600at2"/>
<dbReference type="Proteomes" id="UP000001867">
    <property type="component" value="Chromosome"/>
</dbReference>
<dbReference type="GO" id="GO:0005737">
    <property type="term" value="C:cytoplasm"/>
    <property type="evidence" value="ECO:0007669"/>
    <property type="project" value="TreeGrafter"/>
</dbReference>
<dbReference type="GO" id="GO:0005524">
    <property type="term" value="F:ATP binding"/>
    <property type="evidence" value="ECO:0007669"/>
    <property type="project" value="UniProtKB-UniRule"/>
</dbReference>
<dbReference type="GO" id="GO:0046872">
    <property type="term" value="F:metal ion binding"/>
    <property type="evidence" value="ECO:0007669"/>
    <property type="project" value="UniProtKB-KW"/>
</dbReference>
<dbReference type="GO" id="GO:0018169">
    <property type="term" value="F:ribosomal S6-glutamic acid ligase activity"/>
    <property type="evidence" value="ECO:0007669"/>
    <property type="project" value="TreeGrafter"/>
</dbReference>
<dbReference type="GO" id="GO:0036211">
    <property type="term" value="P:protein modification process"/>
    <property type="evidence" value="ECO:0007669"/>
    <property type="project" value="InterPro"/>
</dbReference>
<dbReference type="GO" id="GO:0009432">
    <property type="term" value="P:SOS response"/>
    <property type="evidence" value="ECO:0007669"/>
    <property type="project" value="TreeGrafter"/>
</dbReference>
<dbReference type="GO" id="GO:0006412">
    <property type="term" value="P:translation"/>
    <property type="evidence" value="ECO:0007669"/>
    <property type="project" value="UniProtKB-KW"/>
</dbReference>
<dbReference type="FunFam" id="3.40.50.20:FF:000004">
    <property type="entry name" value="Probable alpha-L-glutamate ligase"/>
    <property type="match status" value="1"/>
</dbReference>
<dbReference type="FunFam" id="3.30.1490.20:FF:000005">
    <property type="entry name" value="Probable alpha-L-glutamate ligase 1"/>
    <property type="match status" value="1"/>
</dbReference>
<dbReference type="Gene3D" id="3.40.50.20">
    <property type="match status" value="1"/>
</dbReference>
<dbReference type="Gene3D" id="3.30.1490.20">
    <property type="entry name" value="ATP-grasp fold, A domain"/>
    <property type="match status" value="1"/>
</dbReference>
<dbReference type="Gene3D" id="3.30.470.20">
    <property type="entry name" value="ATP-grasp fold, B domain"/>
    <property type="match status" value="1"/>
</dbReference>
<dbReference type="HAMAP" id="MF_01552">
    <property type="entry name" value="RimK"/>
    <property type="match status" value="1"/>
</dbReference>
<dbReference type="InterPro" id="IPR011761">
    <property type="entry name" value="ATP-grasp"/>
</dbReference>
<dbReference type="InterPro" id="IPR013651">
    <property type="entry name" value="ATP-grasp_RimK-type"/>
</dbReference>
<dbReference type="InterPro" id="IPR013815">
    <property type="entry name" value="ATP_grasp_subdomain_1"/>
</dbReference>
<dbReference type="InterPro" id="IPR023533">
    <property type="entry name" value="RimK"/>
</dbReference>
<dbReference type="InterPro" id="IPR041107">
    <property type="entry name" value="Rimk_N"/>
</dbReference>
<dbReference type="InterPro" id="IPR004666">
    <property type="entry name" value="Rp_bS6_RimK/Lys_biosynth_LsyX"/>
</dbReference>
<dbReference type="NCBIfam" id="NF007764">
    <property type="entry name" value="PRK10446.1"/>
    <property type="match status" value="1"/>
</dbReference>
<dbReference type="NCBIfam" id="TIGR00768">
    <property type="entry name" value="rimK_fam"/>
    <property type="match status" value="1"/>
</dbReference>
<dbReference type="PANTHER" id="PTHR21621:SF7">
    <property type="entry name" value="RIBOSOMAL PROTEIN BS6--L-GLUTAMATE LIGASE"/>
    <property type="match status" value="1"/>
</dbReference>
<dbReference type="PANTHER" id="PTHR21621">
    <property type="entry name" value="RIBOSOMAL PROTEIN S6 MODIFICATION PROTEIN"/>
    <property type="match status" value="1"/>
</dbReference>
<dbReference type="Pfam" id="PF08443">
    <property type="entry name" value="RimK"/>
    <property type="match status" value="1"/>
</dbReference>
<dbReference type="Pfam" id="PF18030">
    <property type="entry name" value="Rimk_N"/>
    <property type="match status" value="1"/>
</dbReference>
<dbReference type="SUPFAM" id="SSF56059">
    <property type="entry name" value="Glutathione synthetase ATP-binding domain-like"/>
    <property type="match status" value="1"/>
</dbReference>
<dbReference type="PROSITE" id="PS50975">
    <property type="entry name" value="ATP_GRASP"/>
    <property type="match status" value="1"/>
</dbReference>
<organism>
    <name type="scientific">Stenotrophomonas maltophilia (strain R551-3)</name>
    <dbReference type="NCBI Taxonomy" id="391008"/>
    <lineage>
        <taxon>Bacteria</taxon>
        <taxon>Pseudomonadati</taxon>
        <taxon>Pseudomonadota</taxon>
        <taxon>Gammaproteobacteria</taxon>
        <taxon>Lysobacterales</taxon>
        <taxon>Lysobacteraceae</taxon>
        <taxon>Stenotrophomonas</taxon>
        <taxon>Stenotrophomonas maltophilia group</taxon>
    </lineage>
</organism>
<gene>
    <name evidence="1" type="primary">rimK</name>
    <name type="ordered locus">Smal_3184</name>
</gene>
<evidence type="ECO:0000255" key="1">
    <source>
        <dbReference type="HAMAP-Rule" id="MF_01552"/>
    </source>
</evidence>
<sequence length="292" mass="31463">MKLAILSRNSTLYSTRRLVEAARARGHTVRILDPLRCYMRIAADGFSMHYKGRPMTGVDMVIPRIGASITRYGTAVLRQFELMGARTPNPSDAILRSRDKLRAHQLLAAKGIDMPVTVFGDNPDDTVDLLSMLGPPPHVVKLNEGTQGRGVILTEKASASRGIVEALRGLYANFLMQEFIGEAKGADLRCFVVGDQVVASMQRQAPEGDFRSNLHAGGTAVAAKASRAEQQVAVRSAKALGLSVCGVDLIRSARGPLVLEINSTPGLEGIEAACGVDVATRIIEHVEKLRKP</sequence>
<proteinExistence type="inferred from homology"/>